<name>PPIA1_RHIO9</name>
<gene>
    <name type="primary">cyp2</name>
    <name type="ORF">RO3G_12864</name>
</gene>
<organism>
    <name type="scientific">Rhizopus delemar (strain RA 99-880 / ATCC MYA-4621 / FGSC 9543 / NRRL 43880)</name>
    <name type="common">Mucormycosis agent</name>
    <name type="synonym">Rhizopus arrhizus var. delemar</name>
    <dbReference type="NCBI Taxonomy" id="246409"/>
    <lineage>
        <taxon>Eukaryota</taxon>
        <taxon>Fungi</taxon>
        <taxon>Fungi incertae sedis</taxon>
        <taxon>Mucoromycota</taxon>
        <taxon>Mucoromycotina</taxon>
        <taxon>Mucoromycetes</taxon>
        <taxon>Mucorales</taxon>
        <taxon>Mucorineae</taxon>
        <taxon>Rhizopodaceae</taxon>
        <taxon>Rhizopus</taxon>
    </lineage>
</organism>
<accession>P0C1H7</accession>
<accession>I1CI73</accession>
<dbReference type="EC" id="5.2.1.8"/>
<dbReference type="EMBL" id="CH476742">
    <property type="protein sequence ID" value="EIE88153.1"/>
    <property type="molecule type" value="Genomic_DNA"/>
</dbReference>
<dbReference type="SMR" id="P0C1H7"/>
<dbReference type="STRING" id="246409.P0C1H7"/>
<dbReference type="Allergome" id="11935">
    <property type="allergen name" value="Rhi o 2"/>
</dbReference>
<dbReference type="VEuPathDB" id="FungiDB:RO3G_12864"/>
<dbReference type="eggNOG" id="KOG0865">
    <property type="taxonomic scope" value="Eukaryota"/>
</dbReference>
<dbReference type="InParanoid" id="P0C1H7"/>
<dbReference type="OMA" id="TWLTGKH"/>
<dbReference type="OrthoDB" id="38969at4827"/>
<dbReference type="Proteomes" id="UP000009138">
    <property type="component" value="Unassembled WGS sequence"/>
</dbReference>
<dbReference type="GO" id="GO:0005737">
    <property type="term" value="C:cytoplasm"/>
    <property type="evidence" value="ECO:0007669"/>
    <property type="project" value="UniProtKB-SubCell"/>
</dbReference>
<dbReference type="GO" id="GO:0016018">
    <property type="term" value="F:cyclosporin A binding"/>
    <property type="evidence" value="ECO:0007669"/>
    <property type="project" value="TreeGrafter"/>
</dbReference>
<dbReference type="GO" id="GO:0003755">
    <property type="term" value="F:peptidyl-prolyl cis-trans isomerase activity"/>
    <property type="evidence" value="ECO:0007669"/>
    <property type="project" value="UniProtKB-KW"/>
</dbReference>
<dbReference type="GO" id="GO:0006457">
    <property type="term" value="P:protein folding"/>
    <property type="evidence" value="ECO:0007669"/>
    <property type="project" value="InterPro"/>
</dbReference>
<dbReference type="CDD" id="cd01926">
    <property type="entry name" value="cyclophilin_ABH_like"/>
    <property type="match status" value="1"/>
</dbReference>
<dbReference type="FunFam" id="2.40.100.10:FF:000013">
    <property type="entry name" value="Peptidyl-prolyl cis-trans isomerase"/>
    <property type="match status" value="1"/>
</dbReference>
<dbReference type="Gene3D" id="2.40.100.10">
    <property type="entry name" value="Cyclophilin-like"/>
    <property type="match status" value="1"/>
</dbReference>
<dbReference type="InterPro" id="IPR029000">
    <property type="entry name" value="Cyclophilin-like_dom_sf"/>
</dbReference>
<dbReference type="InterPro" id="IPR024936">
    <property type="entry name" value="Cyclophilin-type_PPIase"/>
</dbReference>
<dbReference type="InterPro" id="IPR020892">
    <property type="entry name" value="Cyclophilin-type_PPIase_CS"/>
</dbReference>
<dbReference type="InterPro" id="IPR002130">
    <property type="entry name" value="Cyclophilin-type_PPIase_dom"/>
</dbReference>
<dbReference type="PANTHER" id="PTHR11071">
    <property type="entry name" value="PEPTIDYL-PROLYL CIS-TRANS ISOMERASE"/>
    <property type="match status" value="1"/>
</dbReference>
<dbReference type="PANTHER" id="PTHR11071:SF561">
    <property type="entry name" value="PEPTIDYL-PROLYL CIS-TRANS ISOMERASE D-RELATED"/>
    <property type="match status" value="1"/>
</dbReference>
<dbReference type="Pfam" id="PF00160">
    <property type="entry name" value="Pro_isomerase"/>
    <property type="match status" value="1"/>
</dbReference>
<dbReference type="PIRSF" id="PIRSF001467">
    <property type="entry name" value="Peptidylpro_ismrse"/>
    <property type="match status" value="1"/>
</dbReference>
<dbReference type="PRINTS" id="PR00153">
    <property type="entry name" value="CSAPPISMRASE"/>
</dbReference>
<dbReference type="SUPFAM" id="SSF50891">
    <property type="entry name" value="Cyclophilin-like"/>
    <property type="match status" value="1"/>
</dbReference>
<dbReference type="PROSITE" id="PS00170">
    <property type="entry name" value="CSA_PPIASE_1"/>
    <property type="match status" value="1"/>
</dbReference>
<dbReference type="PROSITE" id="PS50072">
    <property type="entry name" value="CSA_PPIASE_2"/>
    <property type="match status" value="1"/>
</dbReference>
<comment type="function">
    <text evidence="1">PPIases accelerate the folding of proteins. It catalyzes the cis-trans isomerization of proline imidic peptide bonds in oligopeptides (By similarity).</text>
</comment>
<comment type="catalytic activity">
    <reaction>
        <text>[protein]-peptidylproline (omega=180) = [protein]-peptidylproline (omega=0)</text>
        <dbReference type="Rhea" id="RHEA:16237"/>
        <dbReference type="Rhea" id="RHEA-COMP:10747"/>
        <dbReference type="Rhea" id="RHEA-COMP:10748"/>
        <dbReference type="ChEBI" id="CHEBI:83833"/>
        <dbReference type="ChEBI" id="CHEBI:83834"/>
        <dbReference type="EC" id="5.2.1.8"/>
    </reaction>
</comment>
<comment type="activity regulation">
    <text evidence="1">Binds cyclosporin A (CsA). CsA mediates some of its effects via an inhibitory action on PPIase (By similarity).</text>
</comment>
<comment type="subcellular location">
    <subcellularLocation>
        <location evidence="1">Cytoplasm</location>
    </subcellularLocation>
</comment>
<comment type="similarity">
    <text evidence="3">Belongs to the cyclophilin-type PPIase family. PPIase A subfamily.</text>
</comment>
<evidence type="ECO:0000250" key="1"/>
<evidence type="ECO:0000255" key="2">
    <source>
        <dbReference type="PROSITE-ProRule" id="PRU00156"/>
    </source>
</evidence>
<evidence type="ECO:0000305" key="3"/>
<protein>
    <recommendedName>
        <fullName>Peptidyl-prolyl cis-trans isomerase A1</fullName>
        <shortName>PPIase A1</shortName>
        <ecNumber>5.2.1.8</ecNumber>
    </recommendedName>
    <alternativeName>
        <fullName>Cyclophilin A1</fullName>
    </alternativeName>
    <alternativeName>
        <fullName>Cyclosporin A-binding protein</fullName>
    </alternativeName>
    <alternativeName>
        <fullName>Rotamase A1</fullName>
    </alternativeName>
</protein>
<reference key="1">
    <citation type="journal article" date="2009" name="PLoS Genet.">
        <title>Genomic analysis of the basal lineage fungus Rhizopus oryzae reveals a whole-genome duplication.</title>
        <authorList>
            <person name="Ma L.-J."/>
            <person name="Ibrahim A.S."/>
            <person name="Skory C."/>
            <person name="Grabherr M.G."/>
            <person name="Burger G."/>
            <person name="Butler M."/>
            <person name="Elias M."/>
            <person name="Idnurm A."/>
            <person name="Lang B.F."/>
            <person name="Sone T."/>
            <person name="Abe A."/>
            <person name="Calvo S.E."/>
            <person name="Corrochano L.M."/>
            <person name="Engels R."/>
            <person name="Fu J."/>
            <person name="Hansberg W."/>
            <person name="Kim J.-M."/>
            <person name="Kodira C.D."/>
            <person name="Koehrsen M.J."/>
            <person name="Liu B."/>
            <person name="Miranda-Saavedra D."/>
            <person name="O'Leary S."/>
            <person name="Ortiz-Castellanos L."/>
            <person name="Poulter R."/>
            <person name="Rodriguez-Romero J."/>
            <person name="Ruiz-Herrera J."/>
            <person name="Shen Y.-Q."/>
            <person name="Zeng Q."/>
            <person name="Galagan J."/>
            <person name="Birren B.W."/>
            <person name="Cuomo C.A."/>
            <person name="Wickes B.L."/>
        </authorList>
    </citation>
    <scope>NUCLEOTIDE SEQUENCE [LARGE SCALE GENOMIC DNA]</scope>
    <source>
        <strain>RA 99-880 / ATCC MYA-4621 / FGSC 9543 / NRRL 43880</strain>
    </source>
</reference>
<sequence length="164" mass="17820">MSNPKVFFDVSANSKPLGRIVMELRADVVPQTAENFRALCTGEKGFGYKGCSFHRVIPEFMLQGGDFTNHNGTGGKSIYGNKFRDENFTLKHTGPGDLSMANAGPNTNGSQFFITTIKCSWLDGKHVVFGRVTEGMDVVQNIESLGSPNGTPRAKIIIDNCGQL</sequence>
<feature type="chain" id="PRO_0000244710" description="Peptidyl-prolyl cis-trans isomerase A1">
    <location>
        <begin position="1"/>
        <end position="164"/>
    </location>
</feature>
<feature type="domain" description="PPIase cyclophilin-type" evidence="2">
    <location>
        <begin position="7"/>
        <end position="163"/>
    </location>
</feature>
<keyword id="KW-0963">Cytoplasm</keyword>
<keyword id="KW-0413">Isomerase</keyword>
<keyword id="KW-1185">Reference proteome</keyword>
<keyword id="KW-0697">Rotamase</keyword>
<proteinExistence type="inferred from homology"/>